<accession>A1AEX2</accession>
<gene>
    <name evidence="2" type="primary">rlmD</name>
    <name type="synonym">rumA</name>
    <name type="ordered locus">Ecok1_27180</name>
    <name type="ORF">APECO1_3746</name>
</gene>
<comment type="function">
    <text evidence="2">Catalyzes the formation of 5-methyl-uridine at position 1939 (m5U1939) in 23S rRNA.</text>
</comment>
<comment type="catalytic activity">
    <reaction evidence="2">
        <text>uridine(1939) in 23S rRNA + S-adenosyl-L-methionine = 5-methyluridine(1939) in 23S rRNA + S-adenosyl-L-homocysteine + H(+)</text>
        <dbReference type="Rhea" id="RHEA:42908"/>
        <dbReference type="Rhea" id="RHEA-COMP:10278"/>
        <dbReference type="Rhea" id="RHEA-COMP:10279"/>
        <dbReference type="ChEBI" id="CHEBI:15378"/>
        <dbReference type="ChEBI" id="CHEBI:57856"/>
        <dbReference type="ChEBI" id="CHEBI:59789"/>
        <dbReference type="ChEBI" id="CHEBI:65315"/>
        <dbReference type="ChEBI" id="CHEBI:74447"/>
        <dbReference type="EC" id="2.1.1.190"/>
    </reaction>
</comment>
<comment type="similarity">
    <text evidence="2">Belongs to the class I-like SAM-binding methyltransferase superfamily. RNA M5U methyltransferase family. RlmD subfamily.</text>
</comment>
<protein>
    <recommendedName>
        <fullName evidence="2">23S rRNA (uracil(1939)-C(5))-methyltransferase RlmD</fullName>
        <ecNumber evidence="2">2.1.1.190</ecNumber>
    </recommendedName>
    <alternativeName>
        <fullName evidence="2">23S rRNA(m5U1939)-methyltransferase</fullName>
    </alternativeName>
</protein>
<dbReference type="EC" id="2.1.1.190" evidence="2"/>
<dbReference type="EMBL" id="CP000468">
    <property type="protein sequence ID" value="ABJ02212.1"/>
    <property type="molecule type" value="Genomic_DNA"/>
</dbReference>
<dbReference type="RefSeq" id="WP_000046816.1">
    <property type="nucleotide sequence ID" value="NZ_CADILS010000024.1"/>
</dbReference>
<dbReference type="SMR" id="A1AEX2"/>
<dbReference type="KEGG" id="ecv:APECO1_3746"/>
<dbReference type="HOGENOM" id="CLU_014689_8_2_6"/>
<dbReference type="Proteomes" id="UP000008216">
    <property type="component" value="Chromosome"/>
</dbReference>
<dbReference type="GO" id="GO:0051539">
    <property type="term" value="F:4 iron, 4 sulfur cluster binding"/>
    <property type="evidence" value="ECO:0007669"/>
    <property type="project" value="UniProtKB-KW"/>
</dbReference>
<dbReference type="GO" id="GO:0005506">
    <property type="term" value="F:iron ion binding"/>
    <property type="evidence" value="ECO:0007669"/>
    <property type="project" value="UniProtKB-UniRule"/>
</dbReference>
<dbReference type="GO" id="GO:0003723">
    <property type="term" value="F:RNA binding"/>
    <property type="evidence" value="ECO:0007669"/>
    <property type="project" value="InterPro"/>
</dbReference>
<dbReference type="GO" id="GO:0070041">
    <property type="term" value="F:rRNA (uridine-C5-)-methyltransferase activity"/>
    <property type="evidence" value="ECO:0007669"/>
    <property type="project" value="UniProtKB-UniRule"/>
</dbReference>
<dbReference type="GO" id="GO:0070475">
    <property type="term" value="P:rRNA base methylation"/>
    <property type="evidence" value="ECO:0007669"/>
    <property type="project" value="TreeGrafter"/>
</dbReference>
<dbReference type="CDD" id="cd02440">
    <property type="entry name" value="AdoMet_MTases"/>
    <property type="match status" value="1"/>
</dbReference>
<dbReference type="FunFam" id="3.40.50.150:FF:000009">
    <property type="entry name" value="23S rRNA (Uracil(1939)-C(5))-methyltransferase RlmD"/>
    <property type="match status" value="1"/>
</dbReference>
<dbReference type="FunFam" id="2.40.50.1070:FF:000004">
    <property type="entry name" value="23S rRNA (uracil(1939)-C(5))-methyltransferase RlmD"/>
    <property type="match status" value="1"/>
</dbReference>
<dbReference type="FunFam" id="2.40.50.140:FF:000097">
    <property type="entry name" value="23S rRNA (uracil(1939)-C(5))-methyltransferase RlmD"/>
    <property type="match status" value="1"/>
</dbReference>
<dbReference type="Gene3D" id="2.40.50.1070">
    <property type="match status" value="1"/>
</dbReference>
<dbReference type="Gene3D" id="2.40.50.140">
    <property type="entry name" value="Nucleic acid-binding proteins"/>
    <property type="match status" value="1"/>
</dbReference>
<dbReference type="Gene3D" id="3.40.50.150">
    <property type="entry name" value="Vaccinia Virus protein VP39"/>
    <property type="match status" value="1"/>
</dbReference>
<dbReference type="HAMAP" id="MF_01010">
    <property type="entry name" value="23SrRNA_methyltr_RlmD"/>
    <property type="match status" value="1"/>
</dbReference>
<dbReference type="InterPro" id="IPR001566">
    <property type="entry name" value="23S_rRNA_MeTrfase_RlmD"/>
</dbReference>
<dbReference type="InterPro" id="IPR030390">
    <property type="entry name" value="MeTrfase_TrmA_AS"/>
</dbReference>
<dbReference type="InterPro" id="IPR030391">
    <property type="entry name" value="MeTrfase_TrmA_CS"/>
</dbReference>
<dbReference type="InterPro" id="IPR012340">
    <property type="entry name" value="NA-bd_OB-fold"/>
</dbReference>
<dbReference type="InterPro" id="IPR029063">
    <property type="entry name" value="SAM-dependent_MTases_sf"/>
</dbReference>
<dbReference type="InterPro" id="IPR002792">
    <property type="entry name" value="TRAM_dom"/>
</dbReference>
<dbReference type="InterPro" id="IPR010280">
    <property type="entry name" value="U5_MeTrfase_fam"/>
</dbReference>
<dbReference type="NCBIfam" id="NF009639">
    <property type="entry name" value="PRK13168.1"/>
    <property type="match status" value="1"/>
</dbReference>
<dbReference type="NCBIfam" id="TIGR00479">
    <property type="entry name" value="rumA"/>
    <property type="match status" value="1"/>
</dbReference>
<dbReference type="PANTHER" id="PTHR11061:SF49">
    <property type="entry name" value="23S RRNA (URACIL(1939)-C(5))-METHYLTRANSFERASE RLMD"/>
    <property type="match status" value="1"/>
</dbReference>
<dbReference type="PANTHER" id="PTHR11061">
    <property type="entry name" value="RNA M5U METHYLTRANSFERASE"/>
    <property type="match status" value="1"/>
</dbReference>
<dbReference type="Pfam" id="PF01938">
    <property type="entry name" value="TRAM"/>
    <property type="match status" value="1"/>
</dbReference>
<dbReference type="Pfam" id="PF05958">
    <property type="entry name" value="tRNA_U5-meth_tr"/>
    <property type="match status" value="1"/>
</dbReference>
<dbReference type="SUPFAM" id="SSF50249">
    <property type="entry name" value="Nucleic acid-binding proteins"/>
    <property type="match status" value="1"/>
</dbReference>
<dbReference type="SUPFAM" id="SSF53335">
    <property type="entry name" value="S-adenosyl-L-methionine-dependent methyltransferases"/>
    <property type="match status" value="1"/>
</dbReference>
<dbReference type="PROSITE" id="PS51687">
    <property type="entry name" value="SAM_MT_RNA_M5U"/>
    <property type="match status" value="1"/>
</dbReference>
<dbReference type="PROSITE" id="PS50926">
    <property type="entry name" value="TRAM"/>
    <property type="match status" value="1"/>
</dbReference>
<dbReference type="PROSITE" id="PS01230">
    <property type="entry name" value="TRMA_1"/>
    <property type="match status" value="1"/>
</dbReference>
<dbReference type="PROSITE" id="PS01231">
    <property type="entry name" value="TRMA_2"/>
    <property type="match status" value="1"/>
</dbReference>
<sequence length="433" mass="47989">MAQFYSAKRRTTTRQIITVSVNDLDSFGQGVARHNGKTLFIPGLLPQENAEVTVTEDKKQYARAKVVRRLSDSPERETPRCPHFGVCGGCQQQHASVDLQQRSKSAALARLMKHEVSEVIADVPWGYRRRARLSLNYLPKTQQLQMGFRKAGSSDIVDVKQCPILVPQLEALLPKVRACLGSLQAMRHLGHVELVQATSGTLMILRHTAPLSSADREKLECFSHSEGLDLYLAPDSEILETVSGEMPWYDSNGLRLTFSPRDFIQVNAGVNQKMVARALEWLDVEPEDCVLDLFCGMGNFTLPLATQAASVVGVEGVPALVEKGQQNARLNGLQNVTFYHENLEEDVTKQPWAKNGFDKVLLDPARAGAAGVMQQIIKLEPIRIVYVSCNPATLARDSEALLKAGYTIARLAMLDMFPHTGHLESMVLFSRVK</sequence>
<reference key="1">
    <citation type="journal article" date="2007" name="J. Bacteriol.">
        <title>The genome sequence of avian pathogenic Escherichia coli strain O1:K1:H7 shares strong similarities with human extraintestinal pathogenic E. coli genomes.</title>
        <authorList>
            <person name="Johnson T.J."/>
            <person name="Kariyawasam S."/>
            <person name="Wannemuehler Y."/>
            <person name="Mangiamele P."/>
            <person name="Johnson S.J."/>
            <person name="Doetkott C."/>
            <person name="Skyberg J.A."/>
            <person name="Lynne A.M."/>
            <person name="Johnson J.R."/>
            <person name="Nolan L.K."/>
        </authorList>
    </citation>
    <scope>NUCLEOTIDE SEQUENCE [LARGE SCALE GENOMIC DNA]</scope>
</reference>
<evidence type="ECO:0000250" key="1"/>
<evidence type="ECO:0000255" key="2">
    <source>
        <dbReference type="HAMAP-Rule" id="MF_01010"/>
    </source>
</evidence>
<organism>
    <name type="scientific">Escherichia coli O1:K1 / APEC</name>
    <dbReference type="NCBI Taxonomy" id="405955"/>
    <lineage>
        <taxon>Bacteria</taxon>
        <taxon>Pseudomonadati</taxon>
        <taxon>Pseudomonadota</taxon>
        <taxon>Gammaproteobacteria</taxon>
        <taxon>Enterobacterales</taxon>
        <taxon>Enterobacteriaceae</taxon>
        <taxon>Escherichia</taxon>
    </lineage>
</organism>
<name>RLMD_ECOK1</name>
<feature type="initiator methionine" description="Removed" evidence="1">
    <location>
        <position position="1"/>
    </location>
</feature>
<feature type="chain" id="PRO_0000282039" description="23S rRNA (uracil(1939)-C(5))-methyltransferase RlmD">
    <location>
        <begin position="2"/>
        <end position="433"/>
    </location>
</feature>
<feature type="domain" description="TRAM" evidence="2">
    <location>
        <begin position="10"/>
        <end position="68"/>
    </location>
</feature>
<feature type="active site" description="Nucleophile" evidence="2">
    <location>
        <position position="389"/>
    </location>
</feature>
<feature type="binding site" evidence="2">
    <location>
        <position position="81"/>
    </location>
    <ligand>
        <name>[4Fe-4S] cluster</name>
        <dbReference type="ChEBI" id="CHEBI:49883"/>
    </ligand>
</feature>
<feature type="binding site" evidence="2">
    <location>
        <position position="87"/>
    </location>
    <ligand>
        <name>[4Fe-4S] cluster</name>
        <dbReference type="ChEBI" id="CHEBI:49883"/>
    </ligand>
</feature>
<feature type="binding site" evidence="2">
    <location>
        <position position="90"/>
    </location>
    <ligand>
        <name>[4Fe-4S] cluster</name>
        <dbReference type="ChEBI" id="CHEBI:49883"/>
    </ligand>
</feature>
<feature type="binding site" evidence="2">
    <location>
        <position position="162"/>
    </location>
    <ligand>
        <name>[4Fe-4S] cluster</name>
        <dbReference type="ChEBI" id="CHEBI:49883"/>
    </ligand>
</feature>
<feature type="binding site" evidence="2">
    <location>
        <position position="265"/>
    </location>
    <ligand>
        <name>S-adenosyl-L-methionine</name>
        <dbReference type="ChEBI" id="CHEBI:59789"/>
    </ligand>
</feature>
<feature type="binding site" evidence="2">
    <location>
        <position position="294"/>
    </location>
    <ligand>
        <name>S-adenosyl-L-methionine</name>
        <dbReference type="ChEBI" id="CHEBI:59789"/>
    </ligand>
</feature>
<feature type="binding site" evidence="2">
    <location>
        <position position="299"/>
    </location>
    <ligand>
        <name>S-adenosyl-L-methionine</name>
        <dbReference type="ChEBI" id="CHEBI:59789"/>
    </ligand>
</feature>
<feature type="binding site" evidence="2">
    <location>
        <position position="315"/>
    </location>
    <ligand>
        <name>S-adenosyl-L-methionine</name>
        <dbReference type="ChEBI" id="CHEBI:59789"/>
    </ligand>
</feature>
<feature type="binding site" evidence="2">
    <location>
        <position position="342"/>
    </location>
    <ligand>
        <name>S-adenosyl-L-methionine</name>
        <dbReference type="ChEBI" id="CHEBI:59789"/>
    </ligand>
</feature>
<feature type="binding site" evidence="2">
    <location>
        <position position="363"/>
    </location>
    <ligand>
        <name>S-adenosyl-L-methionine</name>
        <dbReference type="ChEBI" id="CHEBI:59789"/>
    </ligand>
</feature>
<keyword id="KW-0004">4Fe-4S</keyword>
<keyword id="KW-0408">Iron</keyword>
<keyword id="KW-0411">Iron-sulfur</keyword>
<keyword id="KW-0479">Metal-binding</keyword>
<keyword id="KW-0489">Methyltransferase</keyword>
<keyword id="KW-1185">Reference proteome</keyword>
<keyword id="KW-0698">rRNA processing</keyword>
<keyword id="KW-0949">S-adenosyl-L-methionine</keyword>
<keyword id="KW-0808">Transferase</keyword>
<proteinExistence type="inferred from homology"/>